<accession>Q85PQ2</accession>
<name>NU2M_SURSU</name>
<feature type="chain" id="PRO_0000256682" description="NADH-ubiquinone oxidoreductase chain 2">
    <location>
        <begin position="1"/>
        <end position="347"/>
    </location>
</feature>
<feature type="transmembrane region" description="Helical" evidence="3">
    <location>
        <begin position="3"/>
        <end position="23"/>
    </location>
</feature>
<feature type="transmembrane region" description="Helical" evidence="3">
    <location>
        <begin position="25"/>
        <end position="45"/>
    </location>
</feature>
<feature type="transmembrane region" description="Helical" evidence="3">
    <location>
        <begin position="59"/>
        <end position="79"/>
    </location>
</feature>
<feature type="transmembrane region" description="Helical" evidence="3">
    <location>
        <begin position="96"/>
        <end position="116"/>
    </location>
</feature>
<feature type="transmembrane region" description="Helical" evidence="3">
    <location>
        <begin position="122"/>
        <end position="142"/>
    </location>
</feature>
<feature type="transmembrane region" description="Helical" evidence="3">
    <location>
        <begin position="149"/>
        <end position="169"/>
    </location>
</feature>
<feature type="transmembrane region" description="Helical" evidence="3">
    <location>
        <begin position="178"/>
        <end position="198"/>
    </location>
</feature>
<feature type="transmembrane region" description="Helical" evidence="3">
    <location>
        <begin position="200"/>
        <end position="220"/>
    </location>
</feature>
<feature type="transmembrane region" description="Helical" evidence="3">
    <location>
        <begin position="242"/>
        <end position="262"/>
    </location>
</feature>
<feature type="transmembrane region" description="Helical" evidence="3">
    <location>
        <begin position="274"/>
        <end position="294"/>
    </location>
</feature>
<feature type="transmembrane region" description="Helical" evidence="3">
    <location>
        <begin position="323"/>
        <end position="343"/>
    </location>
</feature>
<keyword id="KW-0249">Electron transport</keyword>
<keyword id="KW-0472">Membrane</keyword>
<keyword id="KW-0496">Mitochondrion</keyword>
<keyword id="KW-0999">Mitochondrion inner membrane</keyword>
<keyword id="KW-0520">NAD</keyword>
<keyword id="KW-1185">Reference proteome</keyword>
<keyword id="KW-0679">Respiratory chain</keyword>
<keyword id="KW-1278">Translocase</keyword>
<keyword id="KW-0812">Transmembrane</keyword>
<keyword id="KW-1133">Transmembrane helix</keyword>
<keyword id="KW-0813">Transport</keyword>
<keyword id="KW-0830">Ubiquinone</keyword>
<proteinExistence type="inferred from homology"/>
<comment type="function">
    <text evidence="1">Core subunit of the mitochondrial membrane respiratory chain NADH dehydrogenase (Complex I) that is believed to belong to the minimal assembly required for catalysis. Complex I functions in the transfer of electrons from NADH to the respiratory chain. The immediate electron acceptor for the enzyme is believed to be ubiquinone (By similarity).</text>
</comment>
<comment type="catalytic activity">
    <reaction>
        <text>a ubiquinone + NADH + 5 H(+)(in) = a ubiquinol + NAD(+) + 4 H(+)(out)</text>
        <dbReference type="Rhea" id="RHEA:29091"/>
        <dbReference type="Rhea" id="RHEA-COMP:9565"/>
        <dbReference type="Rhea" id="RHEA-COMP:9566"/>
        <dbReference type="ChEBI" id="CHEBI:15378"/>
        <dbReference type="ChEBI" id="CHEBI:16389"/>
        <dbReference type="ChEBI" id="CHEBI:17976"/>
        <dbReference type="ChEBI" id="CHEBI:57540"/>
        <dbReference type="ChEBI" id="CHEBI:57945"/>
        <dbReference type="EC" id="7.1.1.2"/>
    </reaction>
</comment>
<comment type="subunit">
    <text evidence="2">Core subunit of respiratory chain NADH dehydrogenase (Complex I) which is composed of 45 different subunits. Interacts with TMEM242.</text>
</comment>
<comment type="subcellular location">
    <subcellularLocation>
        <location>Mitochondrion inner membrane</location>
        <topology>Multi-pass membrane protein</topology>
    </subcellularLocation>
</comment>
<comment type="similarity">
    <text evidence="4">Belongs to the complex I subunit 2 family.</text>
</comment>
<protein>
    <recommendedName>
        <fullName evidence="2">NADH-ubiquinone oxidoreductase chain 2</fullName>
        <ecNumber>7.1.1.2</ecNumber>
    </recommendedName>
    <alternativeName>
        <fullName>NADH dehydrogenase subunit 2</fullName>
    </alternativeName>
</protein>
<gene>
    <name evidence="2" type="primary">MT-ND2</name>
    <name type="synonym">MTND2</name>
    <name type="synonym">NADH2</name>
    <name type="synonym">ND2</name>
</gene>
<geneLocation type="mitochondrion"/>
<reference key="1">
    <citation type="journal article" date="2003" name="Nature">
        <title>Single origin of Malagasy Carnivora from an African ancestor.</title>
        <authorList>
            <person name="Yoder A.D."/>
            <person name="Burns M.M."/>
            <person name="Zehr S."/>
            <person name="Delefosse T."/>
            <person name="Veron G."/>
            <person name="Goodman S.M."/>
            <person name="Flynn J.J."/>
        </authorList>
    </citation>
    <scope>NUCLEOTIDE SEQUENCE [GENOMIC DNA]</scope>
</reference>
<dbReference type="EC" id="7.1.1.2"/>
<dbReference type="EMBL" id="AY170054">
    <property type="protein sequence ID" value="AAN84588.1"/>
    <property type="molecule type" value="Genomic_DNA"/>
</dbReference>
<dbReference type="SMR" id="Q85PQ2"/>
<dbReference type="Proteomes" id="UP000472268">
    <property type="component" value="Unplaced"/>
</dbReference>
<dbReference type="GO" id="GO:0005743">
    <property type="term" value="C:mitochondrial inner membrane"/>
    <property type="evidence" value="ECO:0007669"/>
    <property type="project" value="UniProtKB-SubCell"/>
</dbReference>
<dbReference type="GO" id="GO:0008137">
    <property type="term" value="F:NADH dehydrogenase (ubiquinone) activity"/>
    <property type="evidence" value="ECO:0007669"/>
    <property type="project" value="UniProtKB-EC"/>
</dbReference>
<dbReference type="GO" id="GO:0006120">
    <property type="term" value="P:mitochondrial electron transport, NADH to ubiquinone"/>
    <property type="evidence" value="ECO:0007669"/>
    <property type="project" value="InterPro"/>
</dbReference>
<dbReference type="InterPro" id="IPR050175">
    <property type="entry name" value="Complex_I_Subunit_2"/>
</dbReference>
<dbReference type="InterPro" id="IPR010933">
    <property type="entry name" value="NADH_DH_su2_C"/>
</dbReference>
<dbReference type="InterPro" id="IPR003917">
    <property type="entry name" value="NADH_UbQ_OxRdtase_chain2"/>
</dbReference>
<dbReference type="InterPro" id="IPR001750">
    <property type="entry name" value="ND/Mrp_TM"/>
</dbReference>
<dbReference type="PANTHER" id="PTHR46552">
    <property type="entry name" value="NADH-UBIQUINONE OXIDOREDUCTASE CHAIN 2"/>
    <property type="match status" value="1"/>
</dbReference>
<dbReference type="PANTHER" id="PTHR46552:SF1">
    <property type="entry name" value="NADH-UBIQUINONE OXIDOREDUCTASE CHAIN 2"/>
    <property type="match status" value="1"/>
</dbReference>
<dbReference type="Pfam" id="PF06444">
    <property type="entry name" value="NADH_dehy_S2_C"/>
    <property type="match status" value="1"/>
</dbReference>
<dbReference type="Pfam" id="PF00361">
    <property type="entry name" value="Proton_antipo_M"/>
    <property type="match status" value="1"/>
</dbReference>
<dbReference type="PRINTS" id="PR01436">
    <property type="entry name" value="NADHDHGNASE2"/>
</dbReference>
<organism>
    <name type="scientific">Suricata suricatta</name>
    <name type="common">Meerkat</name>
    <dbReference type="NCBI Taxonomy" id="37032"/>
    <lineage>
        <taxon>Eukaryota</taxon>
        <taxon>Metazoa</taxon>
        <taxon>Chordata</taxon>
        <taxon>Craniata</taxon>
        <taxon>Vertebrata</taxon>
        <taxon>Euteleostomi</taxon>
        <taxon>Mammalia</taxon>
        <taxon>Eutheria</taxon>
        <taxon>Laurasiatheria</taxon>
        <taxon>Carnivora</taxon>
        <taxon>Feliformia</taxon>
        <taxon>Herpestidae</taxon>
        <taxon>Suricata</taxon>
    </lineage>
</organism>
<evidence type="ECO:0000250" key="1"/>
<evidence type="ECO:0000250" key="2">
    <source>
        <dbReference type="UniProtKB" id="P03891"/>
    </source>
</evidence>
<evidence type="ECO:0000255" key="3"/>
<evidence type="ECO:0000305" key="4"/>
<sequence>MKPPILFTILLTVISGTMIVLMSSHWLMIWIGFEMNTLAIIPILMKKSNPRAIEASTKYFLTQATASMILMMGITINLMYSGQWTMSKTLCPMASTMMTIALAMKLGLAPFHFWVPEVTQGVHMSSGLILLTWQKIAPLLVLYQISPTIDPNLLLPMAMMSVLIGGWGGLNQTQLRKILAYSSIAHMGWMATITLYNPTMMLLNLTIYIIMTLTTFMLFMHNSTTTTLSLSQTWNKTPLVTSLILMLMLSLGGLPPLSGFIPKWMIIQELTKNEMIIMPTLLAITALLNLYFYMRLTYTTTLTMFPSTNNMKMKWKFDNTKKMILLPPLTVISTMLLPITPLLSILD</sequence>